<feature type="chain" id="PRO_0000142359" description="Metalloprotease TldD homolog">
    <location>
        <begin position="1"/>
        <end position="482"/>
    </location>
</feature>
<protein>
    <recommendedName>
        <fullName>Metalloprotease TldD homolog</fullName>
        <ecNumber>3.4.-.-</ecNumber>
    </recommendedName>
</protein>
<keyword id="KW-0378">Hydrolase</keyword>
<keyword id="KW-0482">Metalloprotease</keyword>
<keyword id="KW-0645">Protease</keyword>
<keyword id="KW-1185">Reference proteome</keyword>
<proteinExistence type="inferred from homology"/>
<reference key="1">
    <citation type="journal article" date="1995" name="Science">
        <title>Whole-genome random sequencing and assembly of Haemophilus influenzae Rd.</title>
        <authorList>
            <person name="Fleischmann R.D."/>
            <person name="Adams M.D."/>
            <person name="White O."/>
            <person name="Clayton R.A."/>
            <person name="Kirkness E.F."/>
            <person name="Kerlavage A.R."/>
            <person name="Bult C.J."/>
            <person name="Tomb J.-F."/>
            <person name="Dougherty B.A."/>
            <person name="Merrick J.M."/>
            <person name="McKenney K."/>
            <person name="Sutton G.G."/>
            <person name="FitzHugh W."/>
            <person name="Fields C.A."/>
            <person name="Gocayne J.D."/>
            <person name="Scott J.D."/>
            <person name="Shirley R."/>
            <person name="Liu L.-I."/>
            <person name="Glodek A."/>
            <person name="Kelley J.M."/>
            <person name="Weidman J.F."/>
            <person name="Phillips C.A."/>
            <person name="Spriggs T."/>
            <person name="Hedblom E."/>
            <person name="Cotton M.D."/>
            <person name="Utterback T.R."/>
            <person name="Hanna M.C."/>
            <person name="Nguyen D.T."/>
            <person name="Saudek D.M."/>
            <person name="Brandon R.C."/>
            <person name="Fine L.D."/>
            <person name="Fritchman J.L."/>
            <person name="Fuhrmann J.L."/>
            <person name="Geoghagen N.S.M."/>
            <person name="Gnehm C.L."/>
            <person name="McDonald L.A."/>
            <person name="Small K.V."/>
            <person name="Fraser C.M."/>
            <person name="Smith H.O."/>
            <person name="Venter J.C."/>
        </authorList>
    </citation>
    <scope>NUCLEOTIDE SEQUENCE [LARGE SCALE GENOMIC DNA]</scope>
    <source>
        <strain>ATCC 51907 / DSM 11121 / KW20 / Rd</strain>
    </source>
</reference>
<name>TLDD_HAEIN</name>
<evidence type="ECO:0000250" key="1"/>
<evidence type="ECO:0000305" key="2"/>
<gene>
    <name type="primary">tldD</name>
    <name type="ordered locus">HI_1653</name>
</gene>
<dbReference type="EC" id="3.4.-.-"/>
<dbReference type="EMBL" id="L42023">
    <property type="status" value="NOT_ANNOTATED_CDS"/>
    <property type="molecule type" value="Genomic_DNA"/>
</dbReference>
<dbReference type="PIR" id="I64173">
    <property type="entry name" value="I64173"/>
</dbReference>
<dbReference type="SMR" id="P45297"/>
<dbReference type="PhylomeDB" id="P45297"/>
<dbReference type="Proteomes" id="UP000000579">
    <property type="component" value="Chromosome"/>
</dbReference>
<dbReference type="GO" id="GO:0005829">
    <property type="term" value="C:cytosol"/>
    <property type="evidence" value="ECO:0000318"/>
    <property type="project" value="GO_Central"/>
</dbReference>
<dbReference type="GO" id="GO:0008237">
    <property type="term" value="F:metallopeptidase activity"/>
    <property type="evidence" value="ECO:0007669"/>
    <property type="project" value="UniProtKB-KW"/>
</dbReference>
<dbReference type="GO" id="GO:0006508">
    <property type="term" value="P:proteolysis"/>
    <property type="evidence" value="ECO:0007669"/>
    <property type="project" value="UniProtKB-KW"/>
</dbReference>
<dbReference type="FunFam" id="3.30.2290.10:FF:000001">
    <property type="entry name" value="Metalloprotease TldD homolog"/>
    <property type="match status" value="1"/>
</dbReference>
<dbReference type="Gene3D" id="3.30.2290.10">
    <property type="entry name" value="PmbA/TldD superfamily"/>
    <property type="match status" value="1"/>
</dbReference>
<dbReference type="InterPro" id="IPR045569">
    <property type="entry name" value="Metalloprtase-TldD/E_C"/>
</dbReference>
<dbReference type="InterPro" id="IPR045570">
    <property type="entry name" value="Metalloprtase-TldD/E_cen_dom"/>
</dbReference>
<dbReference type="InterPro" id="IPR002510">
    <property type="entry name" value="Metalloprtase-TldD/E_N"/>
</dbReference>
<dbReference type="InterPro" id="IPR051463">
    <property type="entry name" value="Peptidase_U62_metallo"/>
</dbReference>
<dbReference type="InterPro" id="IPR025502">
    <property type="entry name" value="TldD"/>
</dbReference>
<dbReference type="InterPro" id="IPR035068">
    <property type="entry name" value="TldD/PmbA_N"/>
</dbReference>
<dbReference type="InterPro" id="IPR036059">
    <property type="entry name" value="TldD/PmbA_sf"/>
</dbReference>
<dbReference type="NCBIfam" id="NF008006">
    <property type="entry name" value="PRK10735.1"/>
    <property type="match status" value="1"/>
</dbReference>
<dbReference type="PANTHER" id="PTHR30624:SF4">
    <property type="entry name" value="METALLOPROTEASE TLDD"/>
    <property type="match status" value="1"/>
</dbReference>
<dbReference type="PANTHER" id="PTHR30624">
    <property type="entry name" value="UNCHARACTERIZED PROTEIN TLDD AND PMBA"/>
    <property type="match status" value="1"/>
</dbReference>
<dbReference type="Pfam" id="PF01523">
    <property type="entry name" value="PmbA_TldD_1st"/>
    <property type="match status" value="1"/>
</dbReference>
<dbReference type="Pfam" id="PF19290">
    <property type="entry name" value="PmbA_TldD_2nd"/>
    <property type="match status" value="1"/>
</dbReference>
<dbReference type="Pfam" id="PF19289">
    <property type="entry name" value="PmbA_TldD_3rd"/>
    <property type="match status" value="1"/>
</dbReference>
<dbReference type="PIRSF" id="PIRSF004919">
    <property type="entry name" value="TldD"/>
    <property type="match status" value="1"/>
</dbReference>
<dbReference type="SUPFAM" id="SSF111283">
    <property type="entry name" value="Putative modulator of DNA gyrase, PmbA/TldD"/>
    <property type="match status" value="1"/>
</dbReference>
<comment type="function">
    <text evidence="1">Probable metalloprotease.</text>
</comment>
<comment type="similarity">
    <text evidence="2">Belongs to the peptidase U62 family.</text>
</comment>
<comment type="sequence caution" evidence="2">
    <conflict type="frameshift">
        <sequence resource="EMBL" id="L42023"/>
    </conflict>
</comment>
<accession>P45297</accession>
<sequence>MLNQVSNTLLTPSNLSTQTLLNIFDIMSHRNIDYADLYFQLSQDESWVLEDGIIKEGSFHIDRGVGVRAVSGEKTGFAYADQINLASLQQCAEAVKGIAQVKQGNLISPSAFNVVNPIARYAAINPLESLTKEKKIELLHLVDRTARAEDHRVTKVSASLSSVYEEVLIMATDGTLAADIRPLVRLSISVLVEENGKRERGSCGSGGRFGLDWFFEVVDGDIRAVLFAKEAVRQALVNLSAVAAPAGLMPVVLGAGWPGVLLHEAVGHGLEGDFNRKESSLFTGKIGEQVTSPLCTIVDDGTIENRRGSLTIDDEGVPSQCNVLIKDGILQGYMQDKMNARLMGVSTTGNGRRESYAHLPMPRMTNTYMLAGQSQFDDLIASVKQGIYAPHFGGGQVDITSGKFVFSTSEAYLIEKGKITKPVKGATLIGSGIEVMQKISMVADKSELDLGIGVCGKEGQSVPVGVGQPALKIDEITVGGTN</sequence>
<organism>
    <name type="scientific">Haemophilus influenzae (strain ATCC 51907 / DSM 11121 / KW20 / Rd)</name>
    <dbReference type="NCBI Taxonomy" id="71421"/>
    <lineage>
        <taxon>Bacteria</taxon>
        <taxon>Pseudomonadati</taxon>
        <taxon>Pseudomonadota</taxon>
        <taxon>Gammaproteobacteria</taxon>
        <taxon>Pasteurellales</taxon>
        <taxon>Pasteurellaceae</taxon>
        <taxon>Haemophilus</taxon>
    </lineage>
</organism>